<gene>
    <name evidence="1" type="primary">truA1</name>
    <name type="ordered locus">BCE33L0135</name>
</gene>
<evidence type="ECO:0000255" key="1">
    <source>
        <dbReference type="HAMAP-Rule" id="MF_00171"/>
    </source>
</evidence>
<protein>
    <recommendedName>
        <fullName evidence="1">tRNA pseudouridine synthase A 1</fullName>
        <ecNumber evidence="1">5.4.99.12</ecNumber>
    </recommendedName>
    <alternativeName>
        <fullName evidence="1">tRNA pseudouridine(38-40) synthase</fullName>
    </alternativeName>
    <alternativeName>
        <fullName evidence="1">tRNA pseudouridylate synthase I 1</fullName>
    </alternativeName>
    <alternativeName>
        <fullName evidence="1">tRNA-uridine isomerase I 1</fullName>
    </alternativeName>
</protein>
<comment type="function">
    <text evidence="1">Formation of pseudouridine at positions 38, 39 and 40 in the anticodon stem and loop of transfer RNAs.</text>
</comment>
<comment type="catalytic activity">
    <reaction evidence="1">
        <text>uridine(38/39/40) in tRNA = pseudouridine(38/39/40) in tRNA</text>
        <dbReference type="Rhea" id="RHEA:22376"/>
        <dbReference type="Rhea" id="RHEA-COMP:10085"/>
        <dbReference type="Rhea" id="RHEA-COMP:10087"/>
        <dbReference type="ChEBI" id="CHEBI:65314"/>
        <dbReference type="ChEBI" id="CHEBI:65315"/>
        <dbReference type="EC" id="5.4.99.12"/>
    </reaction>
</comment>
<comment type="subunit">
    <text evidence="1">Homodimer.</text>
</comment>
<comment type="similarity">
    <text evidence="1">Belongs to the tRNA pseudouridine synthase TruA family.</text>
</comment>
<keyword id="KW-0413">Isomerase</keyword>
<keyword id="KW-0819">tRNA processing</keyword>
<feature type="chain" id="PRO_0000057325" description="tRNA pseudouridine synthase A 1">
    <location>
        <begin position="1"/>
        <end position="247"/>
    </location>
</feature>
<feature type="active site" description="Nucleophile" evidence="1">
    <location>
        <position position="53"/>
    </location>
</feature>
<feature type="binding site" evidence="1">
    <location>
        <position position="111"/>
    </location>
    <ligand>
        <name>substrate</name>
    </ligand>
</feature>
<sequence length="247" mass="28772">MDRIKCTVAYDGMHFCGYQIQPQHRTVQQEIEKALQKLHKGELVRVQASGRTDSTVHAKGQVIHFDTPLSLEEWQWSNALNTMLPDDIVITQVEKKTEEFHARYGVERKEYRYRVLVSKTADVFRRNYVYQYPYPLEVNSIRKAIPYFIGTHDFTSFCSAKTDKKDKVRTIYEIELIEQDDELIFRFVGNGFLYNMVRIIVGTLLNVGQGKLDPDSIPEILAKQNRQFAGKMAPGHGLYLWQVNYNN</sequence>
<accession>Q63H59</accession>
<proteinExistence type="inferred from homology"/>
<name>TRUA1_BACCZ</name>
<dbReference type="EC" id="5.4.99.12" evidence="1"/>
<dbReference type="EMBL" id="CP000001">
    <property type="protein sequence ID" value="AAU20096.1"/>
    <property type="molecule type" value="Genomic_DNA"/>
</dbReference>
<dbReference type="SMR" id="Q63H59"/>
<dbReference type="KEGG" id="bcz:BCE33L0135"/>
<dbReference type="PATRIC" id="fig|288681.22.peg.15"/>
<dbReference type="Proteomes" id="UP000002612">
    <property type="component" value="Chromosome"/>
</dbReference>
<dbReference type="GO" id="GO:0003723">
    <property type="term" value="F:RNA binding"/>
    <property type="evidence" value="ECO:0007669"/>
    <property type="project" value="InterPro"/>
</dbReference>
<dbReference type="GO" id="GO:0160147">
    <property type="term" value="F:tRNA pseudouridine(38-40) synthase activity"/>
    <property type="evidence" value="ECO:0007669"/>
    <property type="project" value="UniProtKB-EC"/>
</dbReference>
<dbReference type="GO" id="GO:0031119">
    <property type="term" value="P:tRNA pseudouridine synthesis"/>
    <property type="evidence" value="ECO:0007669"/>
    <property type="project" value="UniProtKB-UniRule"/>
</dbReference>
<dbReference type="CDD" id="cd02570">
    <property type="entry name" value="PseudoU_synth_EcTruA"/>
    <property type="match status" value="1"/>
</dbReference>
<dbReference type="FunFam" id="3.30.70.580:FF:000001">
    <property type="entry name" value="tRNA pseudouridine synthase A"/>
    <property type="match status" value="1"/>
</dbReference>
<dbReference type="FunFam" id="3.30.70.660:FF:000004">
    <property type="entry name" value="tRNA pseudouridine synthase A"/>
    <property type="match status" value="1"/>
</dbReference>
<dbReference type="Gene3D" id="3.30.70.660">
    <property type="entry name" value="Pseudouridine synthase I, catalytic domain, C-terminal subdomain"/>
    <property type="match status" value="1"/>
</dbReference>
<dbReference type="Gene3D" id="3.30.70.580">
    <property type="entry name" value="Pseudouridine synthase I, catalytic domain, N-terminal subdomain"/>
    <property type="match status" value="1"/>
</dbReference>
<dbReference type="HAMAP" id="MF_00171">
    <property type="entry name" value="TruA"/>
    <property type="match status" value="1"/>
</dbReference>
<dbReference type="InterPro" id="IPR020103">
    <property type="entry name" value="PsdUridine_synth_cat_dom_sf"/>
</dbReference>
<dbReference type="InterPro" id="IPR001406">
    <property type="entry name" value="PsdUridine_synth_TruA"/>
</dbReference>
<dbReference type="InterPro" id="IPR020097">
    <property type="entry name" value="PsdUridine_synth_TruA_a/b_dom"/>
</dbReference>
<dbReference type="InterPro" id="IPR020095">
    <property type="entry name" value="PsdUridine_synth_TruA_C"/>
</dbReference>
<dbReference type="InterPro" id="IPR020094">
    <property type="entry name" value="TruA/RsuA/RluB/E/F_N"/>
</dbReference>
<dbReference type="NCBIfam" id="TIGR00071">
    <property type="entry name" value="hisT_truA"/>
    <property type="match status" value="1"/>
</dbReference>
<dbReference type="PANTHER" id="PTHR11142">
    <property type="entry name" value="PSEUDOURIDYLATE SYNTHASE"/>
    <property type="match status" value="1"/>
</dbReference>
<dbReference type="PANTHER" id="PTHR11142:SF0">
    <property type="entry name" value="TRNA PSEUDOURIDINE SYNTHASE-LIKE 1"/>
    <property type="match status" value="1"/>
</dbReference>
<dbReference type="Pfam" id="PF01416">
    <property type="entry name" value="PseudoU_synth_1"/>
    <property type="match status" value="2"/>
</dbReference>
<dbReference type="PIRSF" id="PIRSF001430">
    <property type="entry name" value="tRNA_psdUrid_synth"/>
    <property type="match status" value="1"/>
</dbReference>
<dbReference type="SUPFAM" id="SSF55120">
    <property type="entry name" value="Pseudouridine synthase"/>
    <property type="match status" value="1"/>
</dbReference>
<organism>
    <name type="scientific">Bacillus cereus (strain ZK / E33L)</name>
    <dbReference type="NCBI Taxonomy" id="288681"/>
    <lineage>
        <taxon>Bacteria</taxon>
        <taxon>Bacillati</taxon>
        <taxon>Bacillota</taxon>
        <taxon>Bacilli</taxon>
        <taxon>Bacillales</taxon>
        <taxon>Bacillaceae</taxon>
        <taxon>Bacillus</taxon>
        <taxon>Bacillus cereus group</taxon>
    </lineage>
</organism>
<reference key="1">
    <citation type="journal article" date="2006" name="J. Bacteriol.">
        <title>Pathogenomic sequence analysis of Bacillus cereus and Bacillus thuringiensis isolates closely related to Bacillus anthracis.</title>
        <authorList>
            <person name="Han C.S."/>
            <person name="Xie G."/>
            <person name="Challacombe J.F."/>
            <person name="Altherr M.R."/>
            <person name="Bhotika S.S."/>
            <person name="Bruce D."/>
            <person name="Campbell C.S."/>
            <person name="Campbell M.L."/>
            <person name="Chen J."/>
            <person name="Chertkov O."/>
            <person name="Cleland C."/>
            <person name="Dimitrijevic M."/>
            <person name="Doggett N.A."/>
            <person name="Fawcett J.J."/>
            <person name="Glavina T."/>
            <person name="Goodwin L.A."/>
            <person name="Hill K.K."/>
            <person name="Hitchcock P."/>
            <person name="Jackson P.J."/>
            <person name="Keim P."/>
            <person name="Kewalramani A.R."/>
            <person name="Longmire J."/>
            <person name="Lucas S."/>
            <person name="Malfatti S."/>
            <person name="McMurry K."/>
            <person name="Meincke L.J."/>
            <person name="Misra M."/>
            <person name="Moseman B.L."/>
            <person name="Mundt M."/>
            <person name="Munk A.C."/>
            <person name="Okinaka R.T."/>
            <person name="Parson-Quintana B."/>
            <person name="Reilly L.P."/>
            <person name="Richardson P."/>
            <person name="Robinson D.L."/>
            <person name="Rubin E."/>
            <person name="Saunders E."/>
            <person name="Tapia R."/>
            <person name="Tesmer J.G."/>
            <person name="Thayer N."/>
            <person name="Thompson L.S."/>
            <person name="Tice H."/>
            <person name="Ticknor L.O."/>
            <person name="Wills P.L."/>
            <person name="Brettin T.S."/>
            <person name="Gilna P."/>
        </authorList>
    </citation>
    <scope>NUCLEOTIDE SEQUENCE [LARGE SCALE GENOMIC DNA]</scope>
    <source>
        <strain>ZK / E33L</strain>
    </source>
</reference>